<feature type="chain" id="PRO_0000141970" description="1-(5-phosphoribosyl)-5-[(5-phosphoribosylamino)methylideneamino] imidazole-4-carboxamide isomerase">
    <location>
        <begin position="1"/>
        <end position="239"/>
    </location>
</feature>
<feature type="active site" description="Proton acceptor" evidence="1">
    <location>
        <position position="8"/>
    </location>
</feature>
<feature type="active site" description="Proton donor" evidence="1">
    <location>
        <position position="129"/>
    </location>
</feature>
<accession>P62352</accession>
<sequence>MEIFPAIDLKKGRCVRLYQGEFSKETVMNEDPVAQAIIFETFGAKRLHIVDLDGAVAGESLNLSVIERICKAVRIPVQVGGGIRSLVAVEKLFSVGVDKVILGTAALYDKPFLEEAVFLYKEKIIVGIDAKNGFVATRGWLDVSEISYIDLAKQMENIGVQTIVFTDISKDGTLAGPNIAQLELLQKSVSTRLIASGGIASIQDVKKLNDMNIYGVIIGKALYEKTIDLEEVLEVTKLC</sequence>
<dbReference type="EC" id="5.3.1.16" evidence="1"/>
<dbReference type="EMBL" id="AE017194">
    <property type="protein sequence ID" value="AAS40458.1"/>
    <property type="molecule type" value="Genomic_DNA"/>
</dbReference>
<dbReference type="SMR" id="P62352"/>
<dbReference type="KEGG" id="bca:BCE_1529"/>
<dbReference type="HOGENOM" id="CLU_048577_1_1_9"/>
<dbReference type="UniPathway" id="UPA00031">
    <property type="reaction ID" value="UER00009"/>
</dbReference>
<dbReference type="Proteomes" id="UP000002527">
    <property type="component" value="Chromosome"/>
</dbReference>
<dbReference type="GO" id="GO:0005737">
    <property type="term" value="C:cytoplasm"/>
    <property type="evidence" value="ECO:0007669"/>
    <property type="project" value="UniProtKB-SubCell"/>
</dbReference>
<dbReference type="GO" id="GO:0003949">
    <property type="term" value="F:1-(5-phosphoribosyl)-5-[(5-phosphoribosylamino)methylideneamino]imidazole-4-carboxamide isomerase activity"/>
    <property type="evidence" value="ECO:0007669"/>
    <property type="project" value="UniProtKB-UniRule"/>
</dbReference>
<dbReference type="GO" id="GO:0000105">
    <property type="term" value="P:L-histidine biosynthetic process"/>
    <property type="evidence" value="ECO:0007669"/>
    <property type="project" value="UniProtKB-UniRule"/>
</dbReference>
<dbReference type="GO" id="GO:0000162">
    <property type="term" value="P:L-tryptophan biosynthetic process"/>
    <property type="evidence" value="ECO:0007669"/>
    <property type="project" value="TreeGrafter"/>
</dbReference>
<dbReference type="CDD" id="cd04732">
    <property type="entry name" value="HisA"/>
    <property type="match status" value="1"/>
</dbReference>
<dbReference type="FunFam" id="3.20.20.70:FF:000009">
    <property type="entry name" value="1-(5-phosphoribosyl)-5-[(5-phosphoribosylamino)methylideneamino] imidazole-4-carboxamide isomerase"/>
    <property type="match status" value="1"/>
</dbReference>
<dbReference type="Gene3D" id="3.20.20.70">
    <property type="entry name" value="Aldolase class I"/>
    <property type="match status" value="1"/>
</dbReference>
<dbReference type="HAMAP" id="MF_01014">
    <property type="entry name" value="HisA"/>
    <property type="match status" value="1"/>
</dbReference>
<dbReference type="InterPro" id="IPR013785">
    <property type="entry name" value="Aldolase_TIM"/>
</dbReference>
<dbReference type="InterPro" id="IPR006062">
    <property type="entry name" value="His_biosynth"/>
</dbReference>
<dbReference type="InterPro" id="IPR006063">
    <property type="entry name" value="HisA_bact_arch"/>
</dbReference>
<dbReference type="InterPro" id="IPR044524">
    <property type="entry name" value="Isoase_HisA-like"/>
</dbReference>
<dbReference type="InterPro" id="IPR023016">
    <property type="entry name" value="Isoase_HisA-like_bact"/>
</dbReference>
<dbReference type="InterPro" id="IPR011060">
    <property type="entry name" value="RibuloseP-bd_barrel"/>
</dbReference>
<dbReference type="NCBIfam" id="TIGR00007">
    <property type="entry name" value="1-(5-phosphoribosyl)-5-[(5-phosphoribosylamino)methylideneamino]imidazole-4-carboxamide isomerase"/>
    <property type="match status" value="1"/>
</dbReference>
<dbReference type="PANTHER" id="PTHR43090">
    <property type="entry name" value="1-(5-PHOSPHORIBOSYL)-5-[(5-PHOSPHORIBOSYLAMINO)METHYLIDENEAMINO] IMIDAZOLE-4-CARBOXAMIDE ISOMERASE"/>
    <property type="match status" value="1"/>
</dbReference>
<dbReference type="PANTHER" id="PTHR43090:SF2">
    <property type="entry name" value="1-(5-PHOSPHORIBOSYL)-5-[(5-PHOSPHORIBOSYLAMINO)METHYLIDENEAMINO] IMIDAZOLE-4-CARBOXAMIDE ISOMERASE"/>
    <property type="match status" value="1"/>
</dbReference>
<dbReference type="Pfam" id="PF00977">
    <property type="entry name" value="His_biosynth"/>
    <property type="match status" value="1"/>
</dbReference>
<dbReference type="SUPFAM" id="SSF51366">
    <property type="entry name" value="Ribulose-phoshate binding barrel"/>
    <property type="match status" value="1"/>
</dbReference>
<evidence type="ECO:0000255" key="1">
    <source>
        <dbReference type="HAMAP-Rule" id="MF_01014"/>
    </source>
</evidence>
<organism>
    <name type="scientific">Bacillus cereus (strain ATCC 10987 / NRS 248)</name>
    <dbReference type="NCBI Taxonomy" id="222523"/>
    <lineage>
        <taxon>Bacteria</taxon>
        <taxon>Bacillati</taxon>
        <taxon>Bacillota</taxon>
        <taxon>Bacilli</taxon>
        <taxon>Bacillales</taxon>
        <taxon>Bacillaceae</taxon>
        <taxon>Bacillus</taxon>
        <taxon>Bacillus cereus group</taxon>
    </lineage>
</organism>
<gene>
    <name evidence="1" type="primary">hisA</name>
    <name type="ordered locus">BCE_1529</name>
</gene>
<keyword id="KW-0028">Amino-acid biosynthesis</keyword>
<keyword id="KW-0963">Cytoplasm</keyword>
<keyword id="KW-0368">Histidine biosynthesis</keyword>
<keyword id="KW-0413">Isomerase</keyword>
<comment type="catalytic activity">
    <reaction evidence="1">
        <text>1-(5-phospho-beta-D-ribosyl)-5-[(5-phospho-beta-D-ribosylamino)methylideneamino]imidazole-4-carboxamide = 5-[(5-phospho-1-deoxy-D-ribulos-1-ylimino)methylamino]-1-(5-phospho-beta-D-ribosyl)imidazole-4-carboxamide</text>
        <dbReference type="Rhea" id="RHEA:15469"/>
        <dbReference type="ChEBI" id="CHEBI:58435"/>
        <dbReference type="ChEBI" id="CHEBI:58525"/>
        <dbReference type="EC" id="5.3.1.16"/>
    </reaction>
</comment>
<comment type="pathway">
    <text evidence="1">Amino-acid biosynthesis; L-histidine biosynthesis; L-histidine from 5-phospho-alpha-D-ribose 1-diphosphate: step 4/9.</text>
</comment>
<comment type="subcellular location">
    <subcellularLocation>
        <location evidence="1">Cytoplasm</location>
    </subcellularLocation>
</comment>
<comment type="similarity">
    <text evidence="1">Belongs to the HisA/HisF family.</text>
</comment>
<name>HIS4_BACC1</name>
<reference key="1">
    <citation type="journal article" date="2004" name="Nucleic Acids Res.">
        <title>The genome sequence of Bacillus cereus ATCC 10987 reveals metabolic adaptations and a large plasmid related to Bacillus anthracis pXO1.</title>
        <authorList>
            <person name="Rasko D.A."/>
            <person name="Ravel J."/>
            <person name="Oekstad O.A."/>
            <person name="Helgason E."/>
            <person name="Cer R.Z."/>
            <person name="Jiang L."/>
            <person name="Shores K.A."/>
            <person name="Fouts D.E."/>
            <person name="Tourasse N.J."/>
            <person name="Angiuoli S.V."/>
            <person name="Kolonay J.F."/>
            <person name="Nelson W.C."/>
            <person name="Kolstoe A.-B."/>
            <person name="Fraser C.M."/>
            <person name="Read T.D."/>
        </authorList>
    </citation>
    <scope>NUCLEOTIDE SEQUENCE [LARGE SCALE GENOMIC DNA]</scope>
    <source>
        <strain>ATCC 10987 / NRS 248</strain>
    </source>
</reference>
<protein>
    <recommendedName>
        <fullName evidence="1">1-(5-phosphoribosyl)-5-[(5-phosphoribosylamino)methylideneamino] imidazole-4-carboxamide isomerase</fullName>
        <ecNumber evidence="1">5.3.1.16</ecNumber>
    </recommendedName>
    <alternativeName>
        <fullName evidence="1">Phosphoribosylformimino-5-aminoimidazole carboxamide ribotide isomerase</fullName>
    </alternativeName>
</protein>
<proteinExistence type="inferred from homology"/>